<reference key="1">
    <citation type="journal article" date="2007" name="PLoS ONE">
        <title>Complete genomic characterization of a pathogenic A.II strain of Francisella tularensis subspecies tularensis.</title>
        <authorList>
            <person name="Beckstrom-Sternberg S.M."/>
            <person name="Auerbach R.K."/>
            <person name="Godbole S."/>
            <person name="Pearson J.V."/>
            <person name="Beckstrom-Sternberg J.S."/>
            <person name="Deng Z."/>
            <person name="Munk C."/>
            <person name="Kubota K."/>
            <person name="Zhou Y."/>
            <person name="Bruce D."/>
            <person name="Noronha J."/>
            <person name="Scheuermann R.H."/>
            <person name="Wang A."/>
            <person name="Wei X."/>
            <person name="Wang J."/>
            <person name="Hao J."/>
            <person name="Wagner D.M."/>
            <person name="Brettin T.S."/>
            <person name="Brown N."/>
            <person name="Gilna P."/>
            <person name="Keim P.S."/>
        </authorList>
    </citation>
    <scope>NUCLEOTIDE SEQUENCE [LARGE SCALE GENOMIC DNA]</scope>
    <source>
        <strain>WY96-3418</strain>
    </source>
</reference>
<comment type="function">
    <text evidence="1">Catalyzes the GTP-dependent ribosomal translocation step during translation elongation. During this step, the ribosome changes from the pre-translocational (PRE) to the post-translocational (POST) state as the newly formed A-site-bound peptidyl-tRNA and P-site-bound deacylated tRNA move to the P and E sites, respectively. Catalyzes the coordinated movement of the two tRNA molecules, the mRNA and conformational changes in the ribosome.</text>
</comment>
<comment type="subcellular location">
    <subcellularLocation>
        <location evidence="1">Cytoplasm</location>
    </subcellularLocation>
</comment>
<comment type="similarity">
    <text evidence="1">Belongs to the TRAFAC class translation factor GTPase superfamily. Classic translation factor GTPase family. EF-G/EF-2 subfamily.</text>
</comment>
<dbReference type="EMBL" id="CP000608">
    <property type="protein sequence ID" value="ABO47435.1"/>
    <property type="molecule type" value="Genomic_DNA"/>
</dbReference>
<dbReference type="RefSeq" id="WP_003027206.1">
    <property type="nucleotide sequence ID" value="NC_009257.1"/>
</dbReference>
<dbReference type="SMR" id="A4IZT6"/>
<dbReference type="KEGG" id="ftw:FTW_1759"/>
<dbReference type="HOGENOM" id="CLU_002794_4_1_6"/>
<dbReference type="GO" id="GO:0005737">
    <property type="term" value="C:cytoplasm"/>
    <property type="evidence" value="ECO:0007669"/>
    <property type="project" value="UniProtKB-SubCell"/>
</dbReference>
<dbReference type="GO" id="GO:0005525">
    <property type="term" value="F:GTP binding"/>
    <property type="evidence" value="ECO:0007669"/>
    <property type="project" value="UniProtKB-UniRule"/>
</dbReference>
<dbReference type="GO" id="GO:0003924">
    <property type="term" value="F:GTPase activity"/>
    <property type="evidence" value="ECO:0007669"/>
    <property type="project" value="InterPro"/>
</dbReference>
<dbReference type="GO" id="GO:0097216">
    <property type="term" value="F:guanosine tetraphosphate binding"/>
    <property type="evidence" value="ECO:0007669"/>
    <property type="project" value="UniProtKB-ARBA"/>
</dbReference>
<dbReference type="GO" id="GO:0003746">
    <property type="term" value="F:translation elongation factor activity"/>
    <property type="evidence" value="ECO:0007669"/>
    <property type="project" value="UniProtKB-UniRule"/>
</dbReference>
<dbReference type="GO" id="GO:0032790">
    <property type="term" value="P:ribosome disassembly"/>
    <property type="evidence" value="ECO:0007669"/>
    <property type="project" value="TreeGrafter"/>
</dbReference>
<dbReference type="CDD" id="cd01886">
    <property type="entry name" value="EF-G"/>
    <property type="match status" value="1"/>
</dbReference>
<dbReference type="CDD" id="cd16262">
    <property type="entry name" value="EFG_III"/>
    <property type="match status" value="1"/>
</dbReference>
<dbReference type="CDD" id="cd01434">
    <property type="entry name" value="EFG_mtEFG1_IV"/>
    <property type="match status" value="1"/>
</dbReference>
<dbReference type="CDD" id="cd03713">
    <property type="entry name" value="EFG_mtEFG_C"/>
    <property type="match status" value="1"/>
</dbReference>
<dbReference type="CDD" id="cd04088">
    <property type="entry name" value="EFG_mtEFG_II"/>
    <property type="match status" value="1"/>
</dbReference>
<dbReference type="FunFam" id="2.40.30.10:FF:000006">
    <property type="entry name" value="Elongation factor G"/>
    <property type="match status" value="1"/>
</dbReference>
<dbReference type="FunFam" id="3.30.230.10:FF:000003">
    <property type="entry name" value="Elongation factor G"/>
    <property type="match status" value="1"/>
</dbReference>
<dbReference type="FunFam" id="3.30.70.240:FF:000001">
    <property type="entry name" value="Elongation factor G"/>
    <property type="match status" value="1"/>
</dbReference>
<dbReference type="FunFam" id="3.30.70.870:FF:000001">
    <property type="entry name" value="Elongation factor G"/>
    <property type="match status" value="1"/>
</dbReference>
<dbReference type="FunFam" id="3.40.50.300:FF:000029">
    <property type="entry name" value="Elongation factor G"/>
    <property type="match status" value="1"/>
</dbReference>
<dbReference type="Gene3D" id="3.30.230.10">
    <property type="match status" value="1"/>
</dbReference>
<dbReference type="Gene3D" id="3.30.70.240">
    <property type="match status" value="1"/>
</dbReference>
<dbReference type="Gene3D" id="3.30.70.870">
    <property type="entry name" value="Elongation Factor G (Translational Gtpase), domain 3"/>
    <property type="match status" value="1"/>
</dbReference>
<dbReference type="Gene3D" id="3.40.50.300">
    <property type="entry name" value="P-loop containing nucleotide triphosphate hydrolases"/>
    <property type="match status" value="1"/>
</dbReference>
<dbReference type="Gene3D" id="2.40.30.10">
    <property type="entry name" value="Translation factors"/>
    <property type="match status" value="1"/>
</dbReference>
<dbReference type="HAMAP" id="MF_00054_B">
    <property type="entry name" value="EF_G_EF_2_B"/>
    <property type="match status" value="1"/>
</dbReference>
<dbReference type="InterPro" id="IPR041095">
    <property type="entry name" value="EFG_II"/>
</dbReference>
<dbReference type="InterPro" id="IPR009022">
    <property type="entry name" value="EFG_III"/>
</dbReference>
<dbReference type="InterPro" id="IPR035647">
    <property type="entry name" value="EFG_III/V"/>
</dbReference>
<dbReference type="InterPro" id="IPR047872">
    <property type="entry name" value="EFG_IV"/>
</dbReference>
<dbReference type="InterPro" id="IPR035649">
    <property type="entry name" value="EFG_V"/>
</dbReference>
<dbReference type="InterPro" id="IPR000640">
    <property type="entry name" value="EFG_V-like"/>
</dbReference>
<dbReference type="InterPro" id="IPR004161">
    <property type="entry name" value="EFTu-like_2"/>
</dbReference>
<dbReference type="InterPro" id="IPR031157">
    <property type="entry name" value="G_TR_CS"/>
</dbReference>
<dbReference type="InterPro" id="IPR027417">
    <property type="entry name" value="P-loop_NTPase"/>
</dbReference>
<dbReference type="InterPro" id="IPR020568">
    <property type="entry name" value="Ribosomal_Su5_D2-typ_SF"/>
</dbReference>
<dbReference type="InterPro" id="IPR014721">
    <property type="entry name" value="Ribsml_uS5_D2-typ_fold_subgr"/>
</dbReference>
<dbReference type="InterPro" id="IPR005225">
    <property type="entry name" value="Small_GTP-bd"/>
</dbReference>
<dbReference type="InterPro" id="IPR000795">
    <property type="entry name" value="T_Tr_GTP-bd_dom"/>
</dbReference>
<dbReference type="InterPro" id="IPR009000">
    <property type="entry name" value="Transl_B-barrel_sf"/>
</dbReference>
<dbReference type="InterPro" id="IPR004540">
    <property type="entry name" value="Transl_elong_EFG/EF2"/>
</dbReference>
<dbReference type="InterPro" id="IPR005517">
    <property type="entry name" value="Transl_elong_EFG/EF2_IV"/>
</dbReference>
<dbReference type="NCBIfam" id="TIGR00484">
    <property type="entry name" value="EF-G"/>
    <property type="match status" value="1"/>
</dbReference>
<dbReference type="NCBIfam" id="NF009381">
    <property type="entry name" value="PRK12740.1-5"/>
    <property type="match status" value="1"/>
</dbReference>
<dbReference type="NCBIfam" id="TIGR00231">
    <property type="entry name" value="small_GTP"/>
    <property type="match status" value="1"/>
</dbReference>
<dbReference type="PANTHER" id="PTHR43261:SF1">
    <property type="entry name" value="RIBOSOME-RELEASING FACTOR 2, MITOCHONDRIAL"/>
    <property type="match status" value="1"/>
</dbReference>
<dbReference type="PANTHER" id="PTHR43261">
    <property type="entry name" value="TRANSLATION ELONGATION FACTOR G-RELATED"/>
    <property type="match status" value="1"/>
</dbReference>
<dbReference type="Pfam" id="PF00679">
    <property type="entry name" value="EFG_C"/>
    <property type="match status" value="1"/>
</dbReference>
<dbReference type="Pfam" id="PF14492">
    <property type="entry name" value="EFG_III"/>
    <property type="match status" value="1"/>
</dbReference>
<dbReference type="Pfam" id="PF03764">
    <property type="entry name" value="EFG_IV"/>
    <property type="match status" value="1"/>
</dbReference>
<dbReference type="Pfam" id="PF00009">
    <property type="entry name" value="GTP_EFTU"/>
    <property type="match status" value="1"/>
</dbReference>
<dbReference type="Pfam" id="PF03144">
    <property type="entry name" value="GTP_EFTU_D2"/>
    <property type="match status" value="1"/>
</dbReference>
<dbReference type="PRINTS" id="PR00315">
    <property type="entry name" value="ELONGATNFCT"/>
</dbReference>
<dbReference type="SMART" id="SM00838">
    <property type="entry name" value="EFG_C"/>
    <property type="match status" value="1"/>
</dbReference>
<dbReference type="SMART" id="SM00889">
    <property type="entry name" value="EFG_IV"/>
    <property type="match status" value="1"/>
</dbReference>
<dbReference type="SUPFAM" id="SSF54980">
    <property type="entry name" value="EF-G C-terminal domain-like"/>
    <property type="match status" value="2"/>
</dbReference>
<dbReference type="SUPFAM" id="SSF52540">
    <property type="entry name" value="P-loop containing nucleoside triphosphate hydrolases"/>
    <property type="match status" value="1"/>
</dbReference>
<dbReference type="SUPFAM" id="SSF54211">
    <property type="entry name" value="Ribosomal protein S5 domain 2-like"/>
    <property type="match status" value="1"/>
</dbReference>
<dbReference type="SUPFAM" id="SSF50447">
    <property type="entry name" value="Translation proteins"/>
    <property type="match status" value="1"/>
</dbReference>
<dbReference type="PROSITE" id="PS00301">
    <property type="entry name" value="G_TR_1"/>
    <property type="match status" value="1"/>
</dbReference>
<dbReference type="PROSITE" id="PS51722">
    <property type="entry name" value="G_TR_2"/>
    <property type="match status" value="1"/>
</dbReference>
<proteinExistence type="inferred from homology"/>
<keyword id="KW-0963">Cytoplasm</keyword>
<keyword id="KW-0251">Elongation factor</keyword>
<keyword id="KW-0342">GTP-binding</keyword>
<keyword id="KW-0547">Nucleotide-binding</keyword>
<keyword id="KW-0648">Protein biosynthesis</keyword>
<gene>
    <name evidence="1" type="primary">fusA</name>
    <name type="ordered locus">FTW_1759</name>
</gene>
<organism>
    <name type="scientific">Francisella tularensis subsp. tularensis (strain WY96-3418)</name>
    <dbReference type="NCBI Taxonomy" id="418136"/>
    <lineage>
        <taxon>Bacteria</taxon>
        <taxon>Pseudomonadati</taxon>
        <taxon>Pseudomonadota</taxon>
        <taxon>Gammaproteobacteria</taxon>
        <taxon>Thiotrichales</taxon>
        <taxon>Francisellaceae</taxon>
        <taxon>Francisella</taxon>
    </lineage>
</organism>
<name>EFG_FRATW</name>
<evidence type="ECO:0000255" key="1">
    <source>
        <dbReference type="HAMAP-Rule" id="MF_00054"/>
    </source>
</evidence>
<feature type="chain" id="PRO_1000008827" description="Elongation factor G">
    <location>
        <begin position="1"/>
        <end position="704"/>
    </location>
</feature>
<feature type="domain" description="tr-type G">
    <location>
        <begin position="8"/>
        <end position="290"/>
    </location>
</feature>
<feature type="binding site" evidence="1">
    <location>
        <begin position="17"/>
        <end position="24"/>
    </location>
    <ligand>
        <name>GTP</name>
        <dbReference type="ChEBI" id="CHEBI:37565"/>
    </ligand>
</feature>
<feature type="binding site" evidence="1">
    <location>
        <begin position="88"/>
        <end position="92"/>
    </location>
    <ligand>
        <name>GTP</name>
        <dbReference type="ChEBI" id="CHEBI:37565"/>
    </ligand>
</feature>
<feature type="binding site" evidence="1">
    <location>
        <begin position="142"/>
        <end position="145"/>
    </location>
    <ligand>
        <name>GTP</name>
        <dbReference type="ChEBI" id="CHEBI:37565"/>
    </ligand>
</feature>
<protein>
    <recommendedName>
        <fullName evidence="1">Elongation factor G</fullName>
        <shortName evidence="1">EF-G</shortName>
    </recommendedName>
</protein>
<accession>A4IZT6</accession>
<sequence>MPRNTALEKYRNIGICAHVDAGKTTTTERILFYTGLSHKIGEVHDGAATMDWMEQEQERGITITSAATTTFWSGMDQQFEKHRINIIDTPGHVDFTIEVERSLRVLDGAVVVFCGSSGVEPQSETVWRQANKYGVPRIVFVNKMDRSGADFERVCAQIKTRLKANVVPVQLNIGAEEDFKGVIDLIRMKAIMWNEEDMGLTYELVDIPADLQDRAEELRMEMIEAAAEASEELMEKYLEGGELSEDEIHQGLRARVLNNEIVLAFCGSAFKNKGVQAVLDGVVRYLPAPNQVPAIKCETEDGEPASRPSSDDAPFAALAFKLATDPFVGNLTFIRVYSGVLKSGDAVYNPVKGKKERVGRIVQMHANKRDEIKEVRAGDIAACIGLKDVTTGDTLCDQEDVVILEKMDFPEPVISVAVEPKSKADQEKMSIALGKLAAEDPSFRVKTDEESGQTIISGMGELHLDIIVDRMRREFKVEANVGNPQVAYRETIRSKVEQEAKFVRQSGGRGQYGHVFVRFEPLDEVDENGEAKVFKFVDEVVGGVVPKEYIGSVAKGIEEQLNNGVLAGYPMIGVKATLYDGSYHDVDSSEMAFKIAGSMALKEGAKKANACILEPIMKVEVVTPEDYLGDVMGDLNRRRGIIEGMDENPSGRVINALVPLAEMFGYATNVRSISQGRASFSMEFKKYAEVPNNIADEIIKSHNS</sequence>